<sequence length="84" mass="9525">MEPSNQIFFYLRRSKLLSGLGEIRMAKGQPLGTMERCYDMLTWGECVPDNCAFSCALKRHGKGGCIKAYDNRPACVCYYTCLRS</sequence>
<proteinExistence type="inferred from homology"/>
<accession>P82722</accession>
<dbReference type="EMBL" id="AL021711">
    <property type="status" value="NOT_ANNOTATED_CDS"/>
    <property type="molecule type" value="Genomic_DNA"/>
</dbReference>
<dbReference type="EMBL" id="AL161550">
    <property type="status" value="NOT_ANNOTATED_CDS"/>
    <property type="molecule type" value="Genomic_DNA"/>
</dbReference>
<dbReference type="EMBL" id="CP002687">
    <property type="status" value="NOT_ANNOTATED_CDS"/>
    <property type="molecule type" value="Genomic_DNA"/>
</dbReference>
<dbReference type="PaxDb" id="3702-AT4G19035.1"/>
<dbReference type="Araport" id="AT4G19035"/>
<dbReference type="TAIR" id="AT4G19035">
    <property type="gene designation" value="LCR7"/>
</dbReference>
<dbReference type="HOGENOM" id="CLU_193259_0_0_1"/>
<dbReference type="InParanoid" id="P82722"/>
<dbReference type="PhylomeDB" id="P82722"/>
<dbReference type="PRO" id="PR:P82722"/>
<dbReference type="Proteomes" id="UP000006548">
    <property type="component" value="Chromosome 4"/>
</dbReference>
<dbReference type="ExpressionAtlas" id="P82722">
    <property type="expression patterns" value="baseline"/>
</dbReference>
<dbReference type="GO" id="GO:0005576">
    <property type="term" value="C:extracellular region"/>
    <property type="evidence" value="ECO:0007669"/>
    <property type="project" value="UniProtKB-SubCell"/>
</dbReference>
<dbReference type="GO" id="GO:0050832">
    <property type="term" value="P:defense response to fungus"/>
    <property type="evidence" value="ECO:0007669"/>
    <property type="project" value="UniProtKB-KW"/>
</dbReference>
<dbReference type="GO" id="GO:0031640">
    <property type="term" value="P:killing of cells of another organism"/>
    <property type="evidence" value="ECO:0007669"/>
    <property type="project" value="UniProtKB-KW"/>
</dbReference>
<dbReference type="InterPro" id="IPR010851">
    <property type="entry name" value="DEFL"/>
</dbReference>
<dbReference type="PANTHER" id="PTHR33830:SF10">
    <property type="entry name" value="DEFENSIN-LIKE PROTEIN 122-RELATED"/>
    <property type="match status" value="1"/>
</dbReference>
<dbReference type="PANTHER" id="PTHR33830">
    <property type="entry name" value="DEFENSIN-LIKE PROTEIN 184-RELATED"/>
    <property type="match status" value="1"/>
</dbReference>
<dbReference type="Pfam" id="PF07333">
    <property type="entry name" value="SLR1-BP"/>
    <property type="match status" value="1"/>
</dbReference>
<feature type="signal peptide" evidence="2">
    <location>
        <begin position="1"/>
        <end position="28"/>
    </location>
</feature>
<feature type="chain" id="PRO_0000206203" description="Putative defensin-like protein 139">
    <location>
        <begin position="29"/>
        <end position="84"/>
    </location>
</feature>
<feature type="disulfide bond" evidence="1">
    <location>
        <begin position="37"/>
        <end position="81"/>
    </location>
</feature>
<feature type="disulfide bond" evidence="1">
    <location>
        <begin position="46"/>
        <end position="65"/>
    </location>
</feature>
<feature type="disulfide bond" evidence="1">
    <location>
        <begin position="51"/>
        <end position="75"/>
    </location>
</feature>
<feature type="disulfide bond" evidence="1">
    <location>
        <begin position="55"/>
        <end position="77"/>
    </location>
</feature>
<comment type="subcellular location">
    <subcellularLocation>
        <location evidence="1">Secreted</location>
    </subcellularLocation>
</comment>
<comment type="similarity">
    <text evidence="3">Belongs to the DEFL family.</text>
</comment>
<gene>
    <name type="primary">LCR7</name>
    <name type="ordered locus">At4g19035</name>
    <name type="ORF">F13C5</name>
</gene>
<keyword id="KW-0929">Antimicrobial</keyword>
<keyword id="KW-1015">Disulfide bond</keyword>
<keyword id="KW-0295">Fungicide</keyword>
<keyword id="KW-0611">Plant defense</keyword>
<keyword id="KW-1185">Reference proteome</keyword>
<keyword id="KW-0964">Secreted</keyword>
<keyword id="KW-0732">Signal</keyword>
<protein>
    <recommendedName>
        <fullName>Putative defensin-like protein 139</fullName>
    </recommendedName>
    <alternativeName>
        <fullName>Putative low-molecular-weight cysteine-rich protein 7</fullName>
        <shortName>Protein LCR7</shortName>
    </alternativeName>
</protein>
<evidence type="ECO:0000250" key="1"/>
<evidence type="ECO:0000255" key="2"/>
<evidence type="ECO:0000305" key="3"/>
<name>DF139_ARATH</name>
<reference evidence="3" key="1">
    <citation type="journal article" date="1999" name="Nature">
        <title>Sequence and analysis of chromosome 4 of the plant Arabidopsis thaliana.</title>
        <authorList>
            <person name="Mayer K.F.X."/>
            <person name="Schueller C."/>
            <person name="Wambutt R."/>
            <person name="Murphy G."/>
            <person name="Volckaert G."/>
            <person name="Pohl T."/>
            <person name="Duesterhoeft A."/>
            <person name="Stiekema W."/>
            <person name="Entian K.-D."/>
            <person name="Terryn N."/>
            <person name="Harris B."/>
            <person name="Ansorge W."/>
            <person name="Brandt P."/>
            <person name="Grivell L.A."/>
            <person name="Rieger M."/>
            <person name="Weichselgartner M."/>
            <person name="de Simone V."/>
            <person name="Obermaier B."/>
            <person name="Mache R."/>
            <person name="Mueller M."/>
            <person name="Kreis M."/>
            <person name="Delseny M."/>
            <person name="Puigdomenech P."/>
            <person name="Watson M."/>
            <person name="Schmidtheini T."/>
            <person name="Reichert B."/>
            <person name="Portetelle D."/>
            <person name="Perez-Alonso M."/>
            <person name="Boutry M."/>
            <person name="Bancroft I."/>
            <person name="Vos P."/>
            <person name="Hoheisel J."/>
            <person name="Zimmermann W."/>
            <person name="Wedler H."/>
            <person name="Ridley P."/>
            <person name="Langham S.-A."/>
            <person name="McCullagh B."/>
            <person name="Bilham L."/>
            <person name="Robben J."/>
            <person name="van der Schueren J."/>
            <person name="Grymonprez B."/>
            <person name="Chuang Y.-J."/>
            <person name="Vandenbussche F."/>
            <person name="Braeken M."/>
            <person name="Weltjens I."/>
            <person name="Voet M."/>
            <person name="Bastiaens I."/>
            <person name="Aert R."/>
            <person name="Defoor E."/>
            <person name="Weitzenegger T."/>
            <person name="Bothe G."/>
            <person name="Ramsperger U."/>
            <person name="Hilbert H."/>
            <person name="Braun M."/>
            <person name="Holzer E."/>
            <person name="Brandt A."/>
            <person name="Peters S."/>
            <person name="van Staveren M."/>
            <person name="Dirkse W."/>
            <person name="Mooijman P."/>
            <person name="Klein Lankhorst R."/>
            <person name="Rose M."/>
            <person name="Hauf J."/>
            <person name="Koetter P."/>
            <person name="Berneiser S."/>
            <person name="Hempel S."/>
            <person name="Feldpausch M."/>
            <person name="Lamberth S."/>
            <person name="Van den Daele H."/>
            <person name="De Keyser A."/>
            <person name="Buysshaert C."/>
            <person name="Gielen J."/>
            <person name="Villarroel R."/>
            <person name="De Clercq R."/>
            <person name="van Montagu M."/>
            <person name="Rogers J."/>
            <person name="Cronin A."/>
            <person name="Quail M.A."/>
            <person name="Bray-Allen S."/>
            <person name="Clark L."/>
            <person name="Doggett J."/>
            <person name="Hall S."/>
            <person name="Kay M."/>
            <person name="Lennard N."/>
            <person name="McLay K."/>
            <person name="Mayes R."/>
            <person name="Pettett A."/>
            <person name="Rajandream M.A."/>
            <person name="Lyne M."/>
            <person name="Benes V."/>
            <person name="Rechmann S."/>
            <person name="Borkova D."/>
            <person name="Bloecker H."/>
            <person name="Scharfe M."/>
            <person name="Grimm M."/>
            <person name="Loehnert T.-H."/>
            <person name="Dose S."/>
            <person name="de Haan M."/>
            <person name="Maarse A.C."/>
            <person name="Schaefer M."/>
            <person name="Mueller-Auer S."/>
            <person name="Gabel C."/>
            <person name="Fuchs M."/>
            <person name="Fartmann B."/>
            <person name="Granderath K."/>
            <person name="Dauner D."/>
            <person name="Herzl A."/>
            <person name="Neumann S."/>
            <person name="Argiriou A."/>
            <person name="Vitale D."/>
            <person name="Liguori R."/>
            <person name="Piravandi E."/>
            <person name="Massenet O."/>
            <person name="Quigley F."/>
            <person name="Clabauld G."/>
            <person name="Muendlein A."/>
            <person name="Felber R."/>
            <person name="Schnabl S."/>
            <person name="Hiller R."/>
            <person name="Schmidt W."/>
            <person name="Lecharny A."/>
            <person name="Aubourg S."/>
            <person name="Chefdor F."/>
            <person name="Cooke R."/>
            <person name="Berger C."/>
            <person name="Monfort A."/>
            <person name="Casacuberta E."/>
            <person name="Gibbons T."/>
            <person name="Weber N."/>
            <person name="Vandenbol M."/>
            <person name="Bargues M."/>
            <person name="Terol J."/>
            <person name="Torres A."/>
            <person name="Perez-Perez A."/>
            <person name="Purnelle B."/>
            <person name="Bent E."/>
            <person name="Johnson S."/>
            <person name="Tacon D."/>
            <person name="Jesse T."/>
            <person name="Heijnen L."/>
            <person name="Schwarz S."/>
            <person name="Scholler P."/>
            <person name="Heber S."/>
            <person name="Francs P."/>
            <person name="Bielke C."/>
            <person name="Frishman D."/>
            <person name="Haase D."/>
            <person name="Lemcke K."/>
            <person name="Mewes H.-W."/>
            <person name="Stocker S."/>
            <person name="Zaccaria P."/>
            <person name="Bevan M."/>
            <person name="Wilson R.K."/>
            <person name="de la Bastide M."/>
            <person name="Habermann K."/>
            <person name="Parnell L."/>
            <person name="Dedhia N."/>
            <person name="Gnoj L."/>
            <person name="Schutz K."/>
            <person name="Huang E."/>
            <person name="Spiegel L."/>
            <person name="Sekhon M."/>
            <person name="Murray J."/>
            <person name="Sheet P."/>
            <person name="Cordes M."/>
            <person name="Abu-Threideh J."/>
            <person name="Stoneking T."/>
            <person name="Kalicki J."/>
            <person name="Graves T."/>
            <person name="Harmon G."/>
            <person name="Edwards J."/>
            <person name="Latreille P."/>
            <person name="Courtney L."/>
            <person name="Cloud J."/>
            <person name="Abbott A."/>
            <person name="Scott K."/>
            <person name="Johnson D."/>
            <person name="Minx P."/>
            <person name="Bentley D."/>
            <person name="Fulton B."/>
            <person name="Miller N."/>
            <person name="Greco T."/>
            <person name="Kemp K."/>
            <person name="Kramer J."/>
            <person name="Fulton L."/>
            <person name="Mardis E."/>
            <person name="Dante M."/>
            <person name="Pepin K."/>
            <person name="Hillier L.W."/>
            <person name="Nelson J."/>
            <person name="Spieth J."/>
            <person name="Ryan E."/>
            <person name="Andrews S."/>
            <person name="Geisel C."/>
            <person name="Layman D."/>
            <person name="Du H."/>
            <person name="Ali J."/>
            <person name="Berghoff A."/>
            <person name="Jones K."/>
            <person name="Drone K."/>
            <person name="Cotton M."/>
            <person name="Joshu C."/>
            <person name="Antonoiu B."/>
            <person name="Zidanic M."/>
            <person name="Strong C."/>
            <person name="Sun H."/>
            <person name="Lamar B."/>
            <person name="Yordan C."/>
            <person name="Ma P."/>
            <person name="Zhong J."/>
            <person name="Preston R."/>
            <person name="Vil D."/>
            <person name="Shekher M."/>
            <person name="Matero A."/>
            <person name="Shah R."/>
            <person name="Swaby I.K."/>
            <person name="O'Shaughnessy A."/>
            <person name="Rodriguez M."/>
            <person name="Hoffman J."/>
            <person name="Till S."/>
            <person name="Granat S."/>
            <person name="Shohdy N."/>
            <person name="Hasegawa A."/>
            <person name="Hameed A."/>
            <person name="Lodhi M."/>
            <person name="Johnson A."/>
            <person name="Chen E."/>
            <person name="Marra M.A."/>
            <person name="Martienssen R."/>
            <person name="McCombie W.R."/>
        </authorList>
    </citation>
    <scope>NUCLEOTIDE SEQUENCE [LARGE SCALE GENOMIC DNA]</scope>
    <source>
        <strain>cv. Columbia</strain>
    </source>
</reference>
<reference key="2">
    <citation type="journal article" date="2017" name="Plant J.">
        <title>Araport11: a complete reannotation of the Arabidopsis thaliana reference genome.</title>
        <authorList>
            <person name="Cheng C.Y."/>
            <person name="Krishnakumar V."/>
            <person name="Chan A.P."/>
            <person name="Thibaud-Nissen F."/>
            <person name="Schobel S."/>
            <person name="Town C.D."/>
        </authorList>
    </citation>
    <scope>GENOME REANNOTATION</scope>
    <source>
        <strain>cv. Columbia</strain>
    </source>
</reference>
<reference evidence="3" key="3">
    <citation type="journal article" date="2001" name="Plant Mol. Biol.">
        <title>Two large Arabidopsis thaliana gene families are homologous to the Brassica gene superfamily that encodes pollen coat proteins and the male component of the self-incompatibility response.</title>
        <authorList>
            <person name="Vanoosthuyse V."/>
            <person name="Miege C."/>
            <person name="Dumas C."/>
            <person name="Cock J.M."/>
        </authorList>
    </citation>
    <scope>IDENTIFICATION</scope>
</reference>
<reference key="4">
    <citation type="journal article" date="2005" name="Plant Physiol.">
        <title>Genome organization of more than 300 defensin-like genes in Arabidopsis.</title>
        <authorList>
            <person name="Silverstein K.A.T."/>
            <person name="Graham M.A."/>
            <person name="Paape T.D."/>
            <person name="VandenBosch K.A."/>
        </authorList>
    </citation>
    <scope>GENE FAMILY</scope>
</reference>
<organism evidence="3">
    <name type="scientific">Arabidopsis thaliana</name>
    <name type="common">Mouse-ear cress</name>
    <dbReference type="NCBI Taxonomy" id="3702"/>
    <lineage>
        <taxon>Eukaryota</taxon>
        <taxon>Viridiplantae</taxon>
        <taxon>Streptophyta</taxon>
        <taxon>Embryophyta</taxon>
        <taxon>Tracheophyta</taxon>
        <taxon>Spermatophyta</taxon>
        <taxon>Magnoliopsida</taxon>
        <taxon>eudicotyledons</taxon>
        <taxon>Gunneridae</taxon>
        <taxon>Pentapetalae</taxon>
        <taxon>rosids</taxon>
        <taxon>malvids</taxon>
        <taxon>Brassicales</taxon>
        <taxon>Brassicaceae</taxon>
        <taxon>Camelineae</taxon>
        <taxon>Arabidopsis</taxon>
    </lineage>
</organism>